<evidence type="ECO:0000250" key="1">
    <source>
        <dbReference type="UniProtKB" id="Q14493"/>
    </source>
</evidence>
<evidence type="ECO:0000269" key="2">
    <source>
    </source>
</evidence>
<evidence type="ECO:0000305" key="3"/>
<feature type="chain" id="PRO_0000100359" description="Oocyte-specific histone RNA stem-loop-binding protein 2">
    <location>
        <begin position="1"/>
        <end position="250"/>
    </location>
</feature>
<feature type="region of interest" description="RNA-binding" evidence="1">
    <location>
        <begin position="102"/>
        <end position="171"/>
    </location>
</feature>
<feature type="short sequence motif" description="Nuclear localization signal NLS1" evidence="1">
    <location>
        <begin position="14"/>
        <end position="17"/>
    </location>
</feature>
<feature type="short sequence motif" description="Nuclear localization signal NLS2" evidence="1">
    <location>
        <begin position="77"/>
        <end position="80"/>
    </location>
</feature>
<gene>
    <name type="primary">slbp2</name>
</gene>
<organism>
    <name type="scientific">Xenopus laevis</name>
    <name type="common">African clawed frog</name>
    <dbReference type="NCBI Taxonomy" id="8355"/>
    <lineage>
        <taxon>Eukaryota</taxon>
        <taxon>Metazoa</taxon>
        <taxon>Chordata</taxon>
        <taxon>Craniata</taxon>
        <taxon>Vertebrata</taxon>
        <taxon>Euteleostomi</taxon>
        <taxon>Amphibia</taxon>
        <taxon>Batrachia</taxon>
        <taxon>Anura</taxon>
        <taxon>Pipoidea</taxon>
        <taxon>Pipidae</taxon>
        <taxon>Xenopodinae</taxon>
        <taxon>Xenopus</taxon>
        <taxon>Xenopus</taxon>
    </lineage>
</organism>
<accession>Q9YGP6</accession>
<dbReference type="EMBL" id="AF106799">
    <property type="protein sequence ID" value="AAD16961.1"/>
    <property type="molecule type" value="mRNA"/>
</dbReference>
<dbReference type="RefSeq" id="NP_001081862.1">
    <property type="nucleotide sequence ID" value="NM_001088393.1"/>
</dbReference>
<dbReference type="SMR" id="Q9YGP6"/>
<dbReference type="GeneID" id="398091"/>
<dbReference type="KEGG" id="xla:398091"/>
<dbReference type="AGR" id="Xenbase:XB-GENE-6069355"/>
<dbReference type="CTD" id="398091"/>
<dbReference type="Xenbase" id="XB-GENE-6069355">
    <property type="gene designation" value="XB5920187.S"/>
</dbReference>
<dbReference type="OrthoDB" id="265795at2759"/>
<dbReference type="Proteomes" id="UP000186698">
    <property type="component" value="Chromosome 3S"/>
</dbReference>
<dbReference type="GO" id="GO:0005737">
    <property type="term" value="C:cytoplasm"/>
    <property type="evidence" value="ECO:0000318"/>
    <property type="project" value="GO_Central"/>
</dbReference>
<dbReference type="GO" id="GO:0071204">
    <property type="term" value="C:histone pre-mRNA 3'end processing complex"/>
    <property type="evidence" value="ECO:0000318"/>
    <property type="project" value="GO_Central"/>
</dbReference>
<dbReference type="GO" id="GO:0071207">
    <property type="term" value="F:histone pre-mRNA stem-loop binding"/>
    <property type="evidence" value="ECO:0000318"/>
    <property type="project" value="GO_Central"/>
</dbReference>
<dbReference type="GO" id="GO:0003729">
    <property type="term" value="F:mRNA binding"/>
    <property type="evidence" value="ECO:0000318"/>
    <property type="project" value="GO_Central"/>
</dbReference>
<dbReference type="GO" id="GO:0006398">
    <property type="term" value="P:mRNA 3'-end processing by stem-loop binding and cleavage"/>
    <property type="evidence" value="ECO:0000318"/>
    <property type="project" value="GO_Central"/>
</dbReference>
<dbReference type="GO" id="GO:0051028">
    <property type="term" value="P:mRNA transport"/>
    <property type="evidence" value="ECO:0000318"/>
    <property type="project" value="GO_Central"/>
</dbReference>
<dbReference type="GO" id="GO:0006417">
    <property type="term" value="P:regulation of translation"/>
    <property type="evidence" value="ECO:0007669"/>
    <property type="project" value="UniProtKB-KW"/>
</dbReference>
<dbReference type="FunFam" id="1.10.8.1120:FF:000001">
    <property type="entry name" value="Histone RNA hairpin-binding protein-like"/>
    <property type="match status" value="1"/>
</dbReference>
<dbReference type="Gene3D" id="1.10.8.1120">
    <property type="entry name" value="Histone RNA hairpin-binding protein RNA-binding domain"/>
    <property type="match status" value="1"/>
</dbReference>
<dbReference type="InterPro" id="IPR026502">
    <property type="entry name" value="SLBP1/SLBP2"/>
</dbReference>
<dbReference type="InterPro" id="IPR029344">
    <property type="entry name" value="SLBP_RNA_bind"/>
</dbReference>
<dbReference type="InterPro" id="IPR038294">
    <property type="entry name" value="SLBP_RNA_bind_sf"/>
</dbReference>
<dbReference type="PANTHER" id="PTHR17408">
    <property type="entry name" value="HISTONE RNA HAIRPIN-BINDING PROTEIN"/>
    <property type="match status" value="1"/>
</dbReference>
<dbReference type="PANTHER" id="PTHR17408:SF11">
    <property type="entry name" value="STEM-LOOP BINDING PROTEIN-LIKE"/>
    <property type="match status" value="1"/>
</dbReference>
<dbReference type="Pfam" id="PF15247">
    <property type="entry name" value="SLBP_RNA_bind"/>
    <property type="match status" value="1"/>
</dbReference>
<name>SLBP2_XENLA</name>
<proteinExistence type="evidence at transcript level"/>
<keyword id="KW-0963">Cytoplasm</keyword>
<keyword id="KW-1185">Reference proteome</keyword>
<keyword id="KW-0694">RNA-binding</keyword>
<keyword id="KW-0810">Translation regulation</keyword>
<comment type="function">
    <text evidence="2">Binds the stem-loop structure of replication-dependent histone mRNAs. Is associated with translationally inactive histone mRNA stored in oocytes. Could be a specific translational repressor. Not involved in histone pre-mRNA processing.</text>
</comment>
<comment type="subcellular location">
    <subcellularLocation>
        <location>Cytoplasm</location>
    </subcellularLocation>
    <text evidence="2">Binds the stem-loop structure of replication-dependent histone mRNAs. Is associated with translationally inactive histone mRNA stored in oocytes. Could be a specific translational repressor. Not involved in histone pre-mRNA processing.</text>
</comment>
<comment type="tissue specificity">
    <text evidence="2">Oocyte.</text>
</comment>
<comment type="developmental stage">
    <text evidence="2">Detectable in stage I oocytes, increases through stages III and IV, then slightly declines as the oocytes mature to stage VI. Present in early embryogenesis until midblastula transition, at which point it becomes undetectable.</text>
</comment>
<comment type="similarity">
    <text evidence="3">Belongs to the SLBP family.</text>
</comment>
<sequence>MPQTLLPEPWMVINGNTAMEDLFGVPSRSRFLSAPGLLSKEECPLNLSGNELRSEFAESISCTEQTYGANTVSVGVDTELDLLEFGRSDFRMATSPDAVGYETDEATLHRRQKQIDYGKNTVGYQCYLQQVPKTERKSGVHPRTPNKSKKYSRRSWDMQIKLWRRDLHAWDPPSQNSFQEDHSFKQTQRLLESWLQESNSLQNPDMDWLGLQLSSLQNLGYSEDQIQNSFDWLQFRGHTNDYTYPHWIGL</sequence>
<reference key="1">
    <citation type="journal article" date="1999" name="Mol. Cell. Biol.">
        <title>Two Xenopus proteins that bind the 3' end of histone mRNA: implications for translational control of histone synthesis during oogenesis.</title>
        <authorList>
            <person name="Wang Z.-F."/>
            <person name="Ingledue T.C. III"/>
            <person name="Dominski Z."/>
            <person name="Sanchez R."/>
            <person name="Marzluff W.F."/>
        </authorList>
    </citation>
    <scope>NUCLEOTIDE SEQUENCE [MRNA]</scope>
    <source>
        <tissue>Oocyte</tissue>
    </source>
</reference>
<protein>
    <recommendedName>
        <fullName>Oocyte-specific histone RNA stem-loop-binding protein 2</fullName>
    </recommendedName>
</protein>